<accession>Q3Z5U8</accession>
<evidence type="ECO:0000255" key="1">
    <source>
        <dbReference type="HAMAP-Rule" id="MF_00520"/>
    </source>
</evidence>
<comment type="catalytic activity">
    <reaction evidence="1">
        <text>D-ribulose + ATP = D-ribulose 5-phosphate + ADP + H(+)</text>
        <dbReference type="Rhea" id="RHEA:17601"/>
        <dbReference type="ChEBI" id="CHEBI:15378"/>
        <dbReference type="ChEBI" id="CHEBI:17173"/>
        <dbReference type="ChEBI" id="CHEBI:30616"/>
        <dbReference type="ChEBI" id="CHEBI:58121"/>
        <dbReference type="ChEBI" id="CHEBI:456216"/>
        <dbReference type="EC" id="2.7.1.16"/>
    </reaction>
</comment>
<comment type="catalytic activity">
    <reaction evidence="1">
        <text>L-ribulose + ATP = L-ribulose 5-phosphate + ADP + H(+)</text>
        <dbReference type="Rhea" id="RHEA:22072"/>
        <dbReference type="ChEBI" id="CHEBI:15378"/>
        <dbReference type="ChEBI" id="CHEBI:16880"/>
        <dbReference type="ChEBI" id="CHEBI:30616"/>
        <dbReference type="ChEBI" id="CHEBI:58226"/>
        <dbReference type="ChEBI" id="CHEBI:456216"/>
        <dbReference type="EC" id="2.7.1.16"/>
    </reaction>
</comment>
<comment type="pathway">
    <text evidence="1">Carbohydrate degradation; L-arabinose degradation via L-ribulose; D-xylulose 5-phosphate from L-arabinose (bacterial route): step 2/3.</text>
</comment>
<comment type="similarity">
    <text evidence="1">Belongs to the ribulokinase family.</text>
</comment>
<feature type="chain" id="PRO_0000263406" description="Ribulokinase">
    <location>
        <begin position="1"/>
        <end position="566"/>
    </location>
</feature>
<dbReference type="EC" id="2.7.1.16" evidence="1"/>
<dbReference type="EMBL" id="CP000038">
    <property type="protein sequence ID" value="AAZ86864.1"/>
    <property type="molecule type" value="Genomic_DNA"/>
</dbReference>
<dbReference type="RefSeq" id="WP_000951878.1">
    <property type="nucleotide sequence ID" value="NC_007384.1"/>
</dbReference>
<dbReference type="SMR" id="Q3Z5U8"/>
<dbReference type="GeneID" id="93777374"/>
<dbReference type="KEGG" id="ssn:SSON_0069"/>
<dbReference type="HOGENOM" id="CLU_009281_9_1_6"/>
<dbReference type="UniPathway" id="UPA00145">
    <property type="reaction ID" value="UER00566"/>
</dbReference>
<dbReference type="Proteomes" id="UP000002529">
    <property type="component" value="Chromosome"/>
</dbReference>
<dbReference type="GO" id="GO:0005737">
    <property type="term" value="C:cytoplasm"/>
    <property type="evidence" value="ECO:0007669"/>
    <property type="project" value="TreeGrafter"/>
</dbReference>
<dbReference type="GO" id="GO:0005524">
    <property type="term" value="F:ATP binding"/>
    <property type="evidence" value="ECO:0007669"/>
    <property type="project" value="UniProtKB-KW"/>
</dbReference>
<dbReference type="GO" id="GO:0019150">
    <property type="term" value="F:D-ribulokinase activity"/>
    <property type="evidence" value="ECO:0007669"/>
    <property type="project" value="TreeGrafter"/>
</dbReference>
<dbReference type="GO" id="GO:0008741">
    <property type="term" value="F:ribulokinase activity"/>
    <property type="evidence" value="ECO:0007669"/>
    <property type="project" value="UniProtKB-UniRule"/>
</dbReference>
<dbReference type="GO" id="GO:0019569">
    <property type="term" value="P:L-arabinose catabolic process to xylulose 5-phosphate"/>
    <property type="evidence" value="ECO:0007669"/>
    <property type="project" value="UniProtKB-UniRule"/>
</dbReference>
<dbReference type="CDD" id="cd07781">
    <property type="entry name" value="ASKHA_NBD_FGGY_L-RBK"/>
    <property type="match status" value="1"/>
</dbReference>
<dbReference type="Gene3D" id="1.20.58.2240">
    <property type="match status" value="1"/>
</dbReference>
<dbReference type="Gene3D" id="3.30.420.40">
    <property type="match status" value="1"/>
</dbReference>
<dbReference type="HAMAP" id="MF_00520">
    <property type="entry name" value="Ribulokinase"/>
    <property type="match status" value="1"/>
</dbReference>
<dbReference type="InterPro" id="IPR043129">
    <property type="entry name" value="ATPase_NBD"/>
</dbReference>
<dbReference type="InterPro" id="IPR018485">
    <property type="entry name" value="FGGY_C"/>
</dbReference>
<dbReference type="InterPro" id="IPR005929">
    <property type="entry name" value="Ribulokinase"/>
</dbReference>
<dbReference type="NCBIfam" id="TIGR01234">
    <property type="entry name" value="L-ribulokinase"/>
    <property type="match status" value="1"/>
</dbReference>
<dbReference type="NCBIfam" id="NF003154">
    <property type="entry name" value="PRK04123.1"/>
    <property type="match status" value="1"/>
</dbReference>
<dbReference type="PANTHER" id="PTHR43435:SF4">
    <property type="entry name" value="FGGY CARBOHYDRATE KINASE DOMAIN-CONTAINING PROTEIN"/>
    <property type="match status" value="1"/>
</dbReference>
<dbReference type="PANTHER" id="PTHR43435">
    <property type="entry name" value="RIBULOKINASE"/>
    <property type="match status" value="1"/>
</dbReference>
<dbReference type="Pfam" id="PF02782">
    <property type="entry name" value="FGGY_C"/>
    <property type="match status" value="1"/>
</dbReference>
<dbReference type="SUPFAM" id="SSF53067">
    <property type="entry name" value="Actin-like ATPase domain"/>
    <property type="match status" value="2"/>
</dbReference>
<name>ARAB_SHISS</name>
<organism>
    <name type="scientific">Shigella sonnei (strain Ss046)</name>
    <dbReference type="NCBI Taxonomy" id="300269"/>
    <lineage>
        <taxon>Bacteria</taxon>
        <taxon>Pseudomonadati</taxon>
        <taxon>Pseudomonadota</taxon>
        <taxon>Gammaproteobacteria</taxon>
        <taxon>Enterobacterales</taxon>
        <taxon>Enterobacteriaceae</taxon>
        <taxon>Shigella</taxon>
    </lineage>
</organism>
<protein>
    <recommendedName>
        <fullName evidence="1">Ribulokinase</fullName>
        <ecNumber evidence="1">2.7.1.16</ecNumber>
    </recommendedName>
</protein>
<reference key="1">
    <citation type="journal article" date="2005" name="Nucleic Acids Res.">
        <title>Genome dynamics and diversity of Shigella species, the etiologic agents of bacillary dysentery.</title>
        <authorList>
            <person name="Yang F."/>
            <person name="Yang J."/>
            <person name="Zhang X."/>
            <person name="Chen L."/>
            <person name="Jiang Y."/>
            <person name="Yan Y."/>
            <person name="Tang X."/>
            <person name="Wang J."/>
            <person name="Xiong Z."/>
            <person name="Dong J."/>
            <person name="Xue Y."/>
            <person name="Zhu Y."/>
            <person name="Xu X."/>
            <person name="Sun L."/>
            <person name="Chen S."/>
            <person name="Nie H."/>
            <person name="Peng J."/>
            <person name="Xu J."/>
            <person name="Wang Y."/>
            <person name="Yuan Z."/>
            <person name="Wen Y."/>
            <person name="Yao Z."/>
            <person name="Shen Y."/>
            <person name="Qiang B."/>
            <person name="Hou Y."/>
            <person name="Yu J."/>
            <person name="Jin Q."/>
        </authorList>
    </citation>
    <scope>NUCLEOTIDE SEQUENCE [LARGE SCALE GENOMIC DNA]</scope>
    <source>
        <strain>Ss046</strain>
    </source>
</reference>
<sequence>MAIAIGLDFGSDSVRALAVECATGEEIATSVEWYPRWQKGQFCDAPNNQFRHHPRDYIESMEAALKIVLAELSAEQRAAVVGIGVDTTGSTPAPIDADGNVLALRPEFAENPNAMFVLWKDHTAVEEAEEITRLCHAPGNVDYSRYIGGIYSSEWFWAKILHVTRQDSAVAQSAASWIELCDWVPALLSGTTRPQDIRRGRCSAGHKSLWHESWGGLPPASFFDELDPILNRHLPSPLFTDTWTADIPVGTLCPEWAQRLGLPESVVISGGAFDCHMGAVGAGAQPNALVKVIGTSTCDILIADKQSVGERAVKGICGQVDGSVVPGFIGLEAGQSAFGDIYAWFGRVLGWPLEQLAAQHPELKAQINASQKQLLPALTEAWAKNPSLDHLPVVLDWFNGRRTPNANQRLKGVITDLNLATNAPLLFGGLIAATAFGARAIMECFTDQGIAVNNVMALGGIARKNQVIMQACCDVLNRPLQIVASDQCCALGAAIFAAVAAKVHADIPSAQQKMASAVEKTLQPRSEQAQRFEQLYRRYQQWAMSAEQHYLPTSAPAQAAQAVATL</sequence>
<proteinExistence type="inferred from homology"/>
<gene>
    <name evidence="1" type="primary">araB</name>
    <name type="ordered locus">SSON_0069</name>
</gene>
<keyword id="KW-0054">Arabinose catabolism</keyword>
<keyword id="KW-0067">ATP-binding</keyword>
<keyword id="KW-0119">Carbohydrate metabolism</keyword>
<keyword id="KW-0418">Kinase</keyword>
<keyword id="KW-0547">Nucleotide-binding</keyword>
<keyword id="KW-1185">Reference proteome</keyword>
<keyword id="KW-0808">Transferase</keyword>